<sequence>MDYDAITALRDRHPAWRLLRAGNASLVLSFLGEFFVEANRGACPAGQVAEALDNHLYALSAGSGESRYPKEPRAYLEDWAATDAGYLRRFYPPGDDEVHYEVTPAFEKAYAWVVNLQSRSFVGTESRLHTVVALLRQIVHGTEVQPDVRLAELRRRRAELEAEIAAVEAGDIAVLDPTAVRDRYQQLSTTARELLSDFREVEENFRLLDRAARERIAAWEGSKGGLLEELVGSRSEITGSDQGRSFQAFYDFLLSEQRQAELAELIAKVSALDVLEADPRIRRIHHDWSEAADRAQRTVRQISEQLRRFLDDQVWLENRRVLDLVRAVESIALEVRDAPPTFGLEVDEPGIEIALPFERPLYQPPTEVAVESHVSAATEEVNADLLFAQTYIDQARLADTIRAVLPEDSSALLSDVVAVHPIEQGAAEIVGYLALNEDDLAIDVDDTEETVLEYPDPADPDITKRARLPKVTVRRR</sequence>
<dbReference type="EMBL" id="CP000480">
    <property type="protein sequence ID" value="ABK71227.1"/>
    <property type="molecule type" value="Genomic_DNA"/>
</dbReference>
<dbReference type="EMBL" id="CP001663">
    <property type="protein sequence ID" value="AFP37717.1"/>
    <property type="molecule type" value="Genomic_DNA"/>
</dbReference>
<dbReference type="RefSeq" id="WP_003892661.1">
    <property type="nucleotide sequence ID" value="NZ_SIJM01000042.1"/>
</dbReference>
<dbReference type="RefSeq" id="YP_885669.1">
    <property type="nucleotide sequence ID" value="NC_008596.1"/>
</dbReference>
<dbReference type="SMR" id="A0QRY1"/>
<dbReference type="STRING" id="246196.MSMEG_1279"/>
<dbReference type="PaxDb" id="246196-MSMEI_1241"/>
<dbReference type="KEGG" id="msb:LJ00_06370"/>
<dbReference type="KEGG" id="msg:MSMEI_1241"/>
<dbReference type="KEGG" id="msm:MSMEG_1279"/>
<dbReference type="PATRIC" id="fig|246196.19.peg.1268"/>
<dbReference type="eggNOG" id="COG4942">
    <property type="taxonomic scope" value="Bacteria"/>
</dbReference>
<dbReference type="OrthoDB" id="138803at2"/>
<dbReference type="Proteomes" id="UP000000757">
    <property type="component" value="Chromosome"/>
</dbReference>
<dbReference type="Proteomes" id="UP000006158">
    <property type="component" value="Chromosome"/>
</dbReference>
<dbReference type="InterPro" id="IPR021804">
    <property type="entry name" value="DUF3375"/>
</dbReference>
<dbReference type="Pfam" id="PF11855">
    <property type="entry name" value="DUF3375"/>
    <property type="match status" value="1"/>
</dbReference>
<name>Y1279_MYCS2</name>
<protein>
    <recommendedName>
        <fullName>Uncharacterized protein MSMEG_1279/MSMEI_1241</fullName>
    </recommendedName>
</protein>
<organism>
    <name type="scientific">Mycolicibacterium smegmatis (strain ATCC 700084 / mc(2)155)</name>
    <name type="common">Mycobacterium smegmatis</name>
    <dbReference type="NCBI Taxonomy" id="246196"/>
    <lineage>
        <taxon>Bacteria</taxon>
        <taxon>Bacillati</taxon>
        <taxon>Actinomycetota</taxon>
        <taxon>Actinomycetes</taxon>
        <taxon>Mycobacteriales</taxon>
        <taxon>Mycobacteriaceae</taxon>
        <taxon>Mycolicibacterium</taxon>
    </lineage>
</organism>
<keyword id="KW-0175">Coiled coil</keyword>
<keyword id="KW-1185">Reference proteome</keyword>
<gene>
    <name type="ordered locus">MSMEG_1279</name>
    <name type="ordered locus">MSMEI_1241</name>
</gene>
<feature type="chain" id="PRO_0000420851" description="Uncharacterized protein MSMEG_1279/MSMEI_1241">
    <location>
        <begin position="1"/>
        <end position="476"/>
    </location>
</feature>
<feature type="coiled-coil region" evidence="1">
    <location>
        <begin position="147"/>
        <end position="204"/>
    </location>
</feature>
<proteinExistence type="evidence at transcript level"/>
<accession>A0QRY1</accession>
<evidence type="ECO:0000255" key="1"/>
<evidence type="ECO:0000269" key="2">
    <source>
    </source>
</evidence>
<reference key="1">
    <citation type="submission" date="2006-10" db="EMBL/GenBank/DDBJ databases">
        <authorList>
            <person name="Fleischmann R.D."/>
            <person name="Dodson R.J."/>
            <person name="Haft D.H."/>
            <person name="Merkel J.S."/>
            <person name="Nelson W.C."/>
            <person name="Fraser C.M."/>
        </authorList>
    </citation>
    <scope>NUCLEOTIDE SEQUENCE [LARGE SCALE GENOMIC DNA]</scope>
    <source>
        <strain>ATCC 700084 / mc(2)155</strain>
    </source>
</reference>
<reference key="2">
    <citation type="journal article" date="2007" name="Genome Biol.">
        <title>Interrupted coding sequences in Mycobacterium smegmatis: authentic mutations or sequencing errors?</title>
        <authorList>
            <person name="Deshayes C."/>
            <person name="Perrodou E."/>
            <person name="Gallien S."/>
            <person name="Euphrasie D."/>
            <person name="Schaeffer C."/>
            <person name="Van-Dorsselaer A."/>
            <person name="Poch O."/>
            <person name="Lecompte O."/>
            <person name="Reyrat J.-M."/>
        </authorList>
    </citation>
    <scope>NUCLEOTIDE SEQUENCE [LARGE SCALE GENOMIC DNA]</scope>
    <source>
        <strain>ATCC 700084 / mc(2)155</strain>
    </source>
</reference>
<reference key="3">
    <citation type="journal article" date="2009" name="Genome Res.">
        <title>Ortho-proteogenomics: multiple proteomes investigation through orthology and a new MS-based protocol.</title>
        <authorList>
            <person name="Gallien S."/>
            <person name="Perrodou E."/>
            <person name="Carapito C."/>
            <person name="Deshayes C."/>
            <person name="Reyrat J.-M."/>
            <person name="Van Dorsselaer A."/>
            <person name="Poch O."/>
            <person name="Schaeffer C."/>
            <person name="Lecompte O."/>
        </authorList>
    </citation>
    <scope>NUCLEOTIDE SEQUENCE [LARGE SCALE GENOMIC DNA]</scope>
    <source>
        <strain>ATCC 700084 / mc(2)155</strain>
    </source>
</reference>
<reference key="4">
    <citation type="journal article" date="2012" name="J. Biol. Chem.">
        <title>Toxin-antitoxin systems of Mycobacterium smegmatis are essential for cell survival.</title>
        <authorList>
            <person name="Frampton R."/>
            <person name="Aggio R.B."/>
            <person name="Villas-Boas S.G."/>
            <person name="Arcus V.L."/>
            <person name="Cook G.M."/>
        </authorList>
    </citation>
    <scope>INDUCTION</scope>
    <source>
        <strain>ATCC 700084 / mc(2)155</strain>
    </source>
</reference>
<comment type="induction">
    <text evidence="2">Constitutively expressed in all growth phases, part of the MSMEG_1276-phd-doc-MSMEG_1279 operon.</text>
</comment>